<sequence>MLGNKFVAQLALQHLRNRGLVNSPSRLTFVRNRFAWGSDAVGPNVPVGGKMGASENPELHTYDGDYRGTISKGDKPIPDYFYRTPTTGRTYIDRCVTYFISAVIWAWFSYHMYYHSGHLLGHWYMPYLSEFTDEELGIPKDSAEDPEYWGNHKKEYGTYR</sequence>
<reference key="1">
    <citation type="journal article" date="1998" name="Science">
        <title>Genome sequence of the nematode C. elegans: a platform for investigating biology.</title>
        <authorList>
            <consortium name="The C. elegans sequencing consortium"/>
        </authorList>
    </citation>
    <scope>NUCLEOTIDE SEQUENCE [LARGE SCALE GENOMIC DNA]</scope>
    <source>
        <strain>Bristol N2</strain>
    </source>
</reference>
<reference key="2">
    <citation type="submission" date="2000-09" db="EMBL/GenBank/DDBJ databases">
        <title>The Caenorhabditis elegans transcriptome project, a complementary view of the genome.</title>
        <authorList>
            <person name="Kohara Y."/>
            <person name="Shin-i T."/>
            <person name="Suzuki Y."/>
            <person name="Sugano S."/>
            <person name="Potdevin M."/>
            <person name="Thierry-Mieg Y."/>
            <person name="Thierry-Mieg D."/>
            <person name="Thierry-Mieg J."/>
        </authorList>
    </citation>
    <scope>NUCLEOTIDE SEQUENCE [LARGE SCALE MRNA]</scope>
    <source>
        <strain>Bristol N2</strain>
    </source>
</reference>
<dbReference type="EMBL" id="Z49910">
    <property type="protein sequence ID" value="CAA90118.1"/>
    <property type="molecule type" value="Genomic_DNA"/>
</dbReference>
<dbReference type="EMBL" id="AF304128">
    <property type="protein sequence ID" value="AAG50241.1"/>
    <property type="molecule type" value="mRNA"/>
</dbReference>
<dbReference type="PIR" id="T22205">
    <property type="entry name" value="T22205"/>
</dbReference>
<dbReference type="FunCoup" id="Q20412">
    <property type="interactions" value="123"/>
</dbReference>
<dbReference type="STRING" id="6239.F44G4.2.1"/>
<dbReference type="PaxDb" id="6239-F44G4.2"/>
<dbReference type="PeptideAtlas" id="Q20412"/>
<dbReference type="EnsemblMetazoa" id="F44G4.2.1">
    <property type="protein sequence ID" value="F44G4.2.1"/>
    <property type="gene ID" value="WBGene00009712"/>
</dbReference>
<dbReference type="KEGG" id="cel:CELE_F44G4.2"/>
<dbReference type="UCSC" id="F44G4.2.1">
    <property type="organism name" value="c. elegans"/>
</dbReference>
<dbReference type="AGR" id="WB:WBGene00009712"/>
<dbReference type="CTD" id="174435"/>
<dbReference type="WormBase" id="F44G4.2">
    <property type="protein sequence ID" value="CE02229"/>
    <property type="gene ID" value="WBGene00009712"/>
    <property type="gene designation" value="ndub-2"/>
</dbReference>
<dbReference type="eggNOG" id="ENOG502SBCC">
    <property type="taxonomic scope" value="Eukaryota"/>
</dbReference>
<dbReference type="GeneTree" id="ENSGT00390000004044"/>
<dbReference type="HOGENOM" id="CLU_1629042_0_0_1"/>
<dbReference type="InParanoid" id="Q20412"/>
<dbReference type="OMA" id="LWGWFVY"/>
<dbReference type="OrthoDB" id="6241903at2759"/>
<dbReference type="PRO" id="PR:Q20412"/>
<dbReference type="Proteomes" id="UP000001940">
    <property type="component" value="Chromosome II"/>
</dbReference>
<dbReference type="Bgee" id="WBGene00009712">
    <property type="expression patterns" value="Expressed in pharyngeal muscle cell (C elegans) and 4 other cell types or tissues"/>
</dbReference>
<dbReference type="GO" id="GO:0005743">
    <property type="term" value="C:mitochondrial inner membrane"/>
    <property type="evidence" value="ECO:0007669"/>
    <property type="project" value="UniProtKB-SubCell"/>
</dbReference>
<dbReference type="GO" id="GO:0005739">
    <property type="term" value="C:mitochondrion"/>
    <property type="evidence" value="ECO:0007005"/>
    <property type="project" value="WormBase"/>
</dbReference>
<dbReference type="GO" id="GO:0045271">
    <property type="term" value="C:respiratory chain complex I"/>
    <property type="evidence" value="ECO:0000250"/>
    <property type="project" value="WormBase"/>
</dbReference>
<dbReference type="GO" id="GO:0032981">
    <property type="term" value="P:mitochondrial respiratory chain complex I assembly"/>
    <property type="evidence" value="ECO:0000318"/>
    <property type="project" value="GO_Central"/>
</dbReference>
<dbReference type="InterPro" id="IPR026627">
    <property type="entry name" value="NDUFB2_animal"/>
</dbReference>
<dbReference type="PANTHER" id="PTHR15223:SF1">
    <property type="entry name" value="NADH DEHYDROGENASE [UBIQUINONE] 1 BETA SUBCOMPLEX SUBUNIT 2, MITOCHONDRIAL"/>
    <property type="match status" value="1"/>
</dbReference>
<dbReference type="PANTHER" id="PTHR15223">
    <property type="entry name" value="NADH-UBIQUINONE OXIDOREDUCTASE AGGG SUBUNIT"/>
    <property type="match status" value="1"/>
</dbReference>
<dbReference type="Pfam" id="PF14813">
    <property type="entry name" value="NADH_B2"/>
    <property type="match status" value="1"/>
</dbReference>
<comment type="function">
    <text evidence="1">Accessory subunit of the mitochondrial membrane respiratory chain NADH dehydrogenase (Complex I), that is believed not to be involved in catalysis. Complex I functions in the transfer of electrons from NADH to the respiratory chain. The immediate electron acceptor for the enzyme is believed to be ubiquinone.</text>
</comment>
<comment type="subunit">
    <text evidence="1">Complex I is composed of 45 different subunits.</text>
</comment>
<comment type="subcellular location">
    <subcellularLocation>
        <location evidence="1">Mitochondrion inner membrane</location>
        <topology evidence="1">Peripheral membrane protein</topology>
        <orientation evidence="1">Matrix side</orientation>
    </subcellularLocation>
</comment>
<comment type="similarity">
    <text evidence="2">Belongs to the complex I NDUFB2 subunit family.</text>
</comment>
<evidence type="ECO:0000250" key="1">
    <source>
        <dbReference type="UniProtKB" id="O95178"/>
    </source>
</evidence>
<evidence type="ECO:0000305" key="2"/>
<evidence type="ECO:0000312" key="3">
    <source>
        <dbReference type="WormBase" id="F44G4.2"/>
    </source>
</evidence>
<feature type="transit peptide" description="Mitochondrion">
    <location>
        <begin position="1"/>
        <end status="unknown"/>
    </location>
</feature>
<feature type="chain" id="PRO_0000020044" description="Probable NADH dehydrogenase [ubiquinone] 1 beta subcomplex subunit 2, mitochondrial">
    <location>
        <begin status="unknown"/>
        <end position="160"/>
    </location>
</feature>
<name>NDUB2_CAEEL</name>
<gene>
    <name evidence="3" type="primary">ndub-2</name>
    <name type="ORF">F44G4.2</name>
</gene>
<organism>
    <name type="scientific">Caenorhabditis elegans</name>
    <dbReference type="NCBI Taxonomy" id="6239"/>
    <lineage>
        <taxon>Eukaryota</taxon>
        <taxon>Metazoa</taxon>
        <taxon>Ecdysozoa</taxon>
        <taxon>Nematoda</taxon>
        <taxon>Chromadorea</taxon>
        <taxon>Rhabditida</taxon>
        <taxon>Rhabditina</taxon>
        <taxon>Rhabditomorpha</taxon>
        <taxon>Rhabditoidea</taxon>
        <taxon>Rhabditidae</taxon>
        <taxon>Peloderinae</taxon>
        <taxon>Caenorhabditis</taxon>
    </lineage>
</organism>
<accession>Q20412</accession>
<protein>
    <recommendedName>
        <fullName>Probable NADH dehydrogenase [ubiquinone] 1 beta subcomplex subunit 2, mitochondrial</fullName>
    </recommendedName>
</protein>
<proteinExistence type="evidence at transcript level"/>
<keyword id="KW-0249">Electron transport</keyword>
<keyword id="KW-0472">Membrane</keyword>
<keyword id="KW-0496">Mitochondrion</keyword>
<keyword id="KW-0999">Mitochondrion inner membrane</keyword>
<keyword id="KW-1185">Reference proteome</keyword>
<keyword id="KW-0679">Respiratory chain</keyword>
<keyword id="KW-0809">Transit peptide</keyword>
<keyword id="KW-0813">Transport</keyword>